<protein>
    <recommendedName>
        <fullName evidence="1">Ribosomal RNA large subunit methyltransferase H</fullName>
        <ecNumber evidence="1">2.1.1.177</ecNumber>
    </recommendedName>
    <alternativeName>
        <fullName evidence="1">23S rRNA (pseudouridine1915-N3)-methyltransferase</fullName>
    </alternativeName>
    <alternativeName>
        <fullName evidence="1">23S rRNA m3Psi1915 methyltransferase</fullName>
    </alternativeName>
    <alternativeName>
        <fullName evidence="1">rRNA (pseudouridine-N3-)-methyltransferase RlmH</fullName>
    </alternativeName>
</protein>
<feature type="chain" id="PRO_0000260625" description="Ribosomal RNA large subunit methyltransferase H">
    <location>
        <begin position="1"/>
        <end position="159"/>
    </location>
</feature>
<feature type="binding site" evidence="1">
    <location>
        <position position="76"/>
    </location>
    <ligand>
        <name>S-adenosyl-L-methionine</name>
        <dbReference type="ChEBI" id="CHEBI:59789"/>
    </ligand>
</feature>
<feature type="binding site" evidence="1">
    <location>
        <position position="108"/>
    </location>
    <ligand>
        <name>S-adenosyl-L-methionine</name>
        <dbReference type="ChEBI" id="CHEBI:59789"/>
    </ligand>
</feature>
<feature type="binding site" evidence="1">
    <location>
        <begin position="127"/>
        <end position="132"/>
    </location>
    <ligand>
        <name>S-adenosyl-L-methionine</name>
        <dbReference type="ChEBI" id="CHEBI:59789"/>
    </ligand>
</feature>
<dbReference type="EC" id="2.1.1.177" evidence="1"/>
<dbReference type="EMBL" id="CP000448">
    <property type="protein sequence ID" value="ABI69756.1"/>
    <property type="molecule type" value="Genomic_DNA"/>
</dbReference>
<dbReference type="RefSeq" id="WP_011641838.1">
    <property type="nucleotide sequence ID" value="NC_008346.1"/>
</dbReference>
<dbReference type="SMR" id="Q0AU48"/>
<dbReference type="STRING" id="335541.Swol_2467"/>
<dbReference type="KEGG" id="swo:Swol_2467"/>
<dbReference type="eggNOG" id="COG1576">
    <property type="taxonomic scope" value="Bacteria"/>
</dbReference>
<dbReference type="HOGENOM" id="CLU_100552_0_0_9"/>
<dbReference type="Proteomes" id="UP000001968">
    <property type="component" value="Chromosome"/>
</dbReference>
<dbReference type="GO" id="GO:0005737">
    <property type="term" value="C:cytoplasm"/>
    <property type="evidence" value="ECO:0007669"/>
    <property type="project" value="UniProtKB-SubCell"/>
</dbReference>
<dbReference type="GO" id="GO:0070038">
    <property type="term" value="F:rRNA (pseudouridine-N3-)-methyltransferase activity"/>
    <property type="evidence" value="ECO:0007669"/>
    <property type="project" value="UniProtKB-UniRule"/>
</dbReference>
<dbReference type="CDD" id="cd18081">
    <property type="entry name" value="RlmH-like"/>
    <property type="match status" value="1"/>
</dbReference>
<dbReference type="Gene3D" id="3.40.1280.10">
    <property type="match status" value="1"/>
</dbReference>
<dbReference type="HAMAP" id="MF_00658">
    <property type="entry name" value="23SrRNA_methyltr_H"/>
    <property type="match status" value="1"/>
</dbReference>
<dbReference type="InterPro" id="IPR029028">
    <property type="entry name" value="Alpha/beta_knot_MTases"/>
</dbReference>
<dbReference type="InterPro" id="IPR003742">
    <property type="entry name" value="RlmH-like"/>
</dbReference>
<dbReference type="InterPro" id="IPR029026">
    <property type="entry name" value="tRNA_m1G_MTases_N"/>
</dbReference>
<dbReference type="PANTHER" id="PTHR33603">
    <property type="entry name" value="METHYLTRANSFERASE"/>
    <property type="match status" value="1"/>
</dbReference>
<dbReference type="PANTHER" id="PTHR33603:SF1">
    <property type="entry name" value="RIBOSOMAL RNA LARGE SUBUNIT METHYLTRANSFERASE H"/>
    <property type="match status" value="1"/>
</dbReference>
<dbReference type="Pfam" id="PF02590">
    <property type="entry name" value="SPOUT_MTase"/>
    <property type="match status" value="1"/>
</dbReference>
<dbReference type="PIRSF" id="PIRSF004505">
    <property type="entry name" value="MT_bac"/>
    <property type="match status" value="1"/>
</dbReference>
<dbReference type="SUPFAM" id="SSF75217">
    <property type="entry name" value="alpha/beta knot"/>
    <property type="match status" value="1"/>
</dbReference>
<keyword id="KW-0963">Cytoplasm</keyword>
<keyword id="KW-0489">Methyltransferase</keyword>
<keyword id="KW-1185">Reference proteome</keyword>
<keyword id="KW-0698">rRNA processing</keyword>
<keyword id="KW-0949">S-adenosyl-L-methionine</keyword>
<keyword id="KW-0808">Transferase</keyword>
<organism>
    <name type="scientific">Syntrophomonas wolfei subsp. wolfei (strain DSM 2245B / Goettingen)</name>
    <dbReference type="NCBI Taxonomy" id="335541"/>
    <lineage>
        <taxon>Bacteria</taxon>
        <taxon>Bacillati</taxon>
        <taxon>Bacillota</taxon>
        <taxon>Clostridia</taxon>
        <taxon>Eubacteriales</taxon>
        <taxon>Syntrophomonadaceae</taxon>
        <taxon>Syntrophomonas</taxon>
    </lineage>
</organism>
<name>RLMH_SYNWW</name>
<accession>Q0AU48</accession>
<sequence>MKYRIISVGRIRESFYLEGVREYLKRLGPYTSIELIDGLEEKIGPRAGEKEIQAILQKEAEKIRRWLDKDEILVVLDLEGQVRSSEEMARQLEKWNASGKSRVTFLLGAAHGLANEIKQQAQETISLSRLTFPHQMAVLILAEQIYRGFKILKGEPYHR</sequence>
<comment type="function">
    <text evidence="1">Specifically methylates the pseudouridine at position 1915 (m3Psi1915) in 23S rRNA.</text>
</comment>
<comment type="catalytic activity">
    <reaction evidence="1">
        <text>pseudouridine(1915) in 23S rRNA + S-adenosyl-L-methionine = N(3)-methylpseudouridine(1915) in 23S rRNA + S-adenosyl-L-homocysteine + H(+)</text>
        <dbReference type="Rhea" id="RHEA:42752"/>
        <dbReference type="Rhea" id="RHEA-COMP:10221"/>
        <dbReference type="Rhea" id="RHEA-COMP:10222"/>
        <dbReference type="ChEBI" id="CHEBI:15378"/>
        <dbReference type="ChEBI" id="CHEBI:57856"/>
        <dbReference type="ChEBI" id="CHEBI:59789"/>
        <dbReference type="ChEBI" id="CHEBI:65314"/>
        <dbReference type="ChEBI" id="CHEBI:74486"/>
        <dbReference type="EC" id="2.1.1.177"/>
    </reaction>
</comment>
<comment type="subunit">
    <text evidence="1">Homodimer.</text>
</comment>
<comment type="subcellular location">
    <subcellularLocation>
        <location evidence="1">Cytoplasm</location>
    </subcellularLocation>
</comment>
<comment type="similarity">
    <text evidence="1">Belongs to the RNA methyltransferase RlmH family.</text>
</comment>
<proteinExistence type="inferred from homology"/>
<reference key="1">
    <citation type="journal article" date="2010" name="Environ. Microbiol.">
        <title>The genome of Syntrophomonas wolfei: new insights into syntrophic metabolism and biohydrogen production.</title>
        <authorList>
            <person name="Sieber J.R."/>
            <person name="Sims D.R."/>
            <person name="Han C."/>
            <person name="Kim E."/>
            <person name="Lykidis A."/>
            <person name="Lapidus A.L."/>
            <person name="McDonnald E."/>
            <person name="Rohlin L."/>
            <person name="Culley D.E."/>
            <person name="Gunsalus R."/>
            <person name="McInerney M.J."/>
        </authorList>
    </citation>
    <scope>NUCLEOTIDE SEQUENCE [LARGE SCALE GENOMIC DNA]</scope>
    <source>
        <strain>DSM 2245B / Goettingen</strain>
    </source>
</reference>
<evidence type="ECO:0000255" key="1">
    <source>
        <dbReference type="HAMAP-Rule" id="MF_00658"/>
    </source>
</evidence>
<gene>
    <name evidence="1" type="primary">rlmH</name>
    <name type="ordered locus">Swol_2467</name>
</gene>